<protein>
    <recommendedName>
        <fullName evidence="1">Phosphoglucosamine mutase</fullName>
        <ecNumber evidence="1">5.4.2.10</ecNumber>
    </recommendedName>
</protein>
<organism>
    <name type="scientific">Burkholderia multivorans (strain ATCC 17616 / 249)</name>
    <dbReference type="NCBI Taxonomy" id="395019"/>
    <lineage>
        <taxon>Bacteria</taxon>
        <taxon>Pseudomonadati</taxon>
        <taxon>Pseudomonadota</taxon>
        <taxon>Betaproteobacteria</taxon>
        <taxon>Burkholderiales</taxon>
        <taxon>Burkholderiaceae</taxon>
        <taxon>Burkholderia</taxon>
        <taxon>Burkholderia cepacia complex</taxon>
    </lineage>
</organism>
<dbReference type="EC" id="5.4.2.10" evidence="1"/>
<dbReference type="EMBL" id="CP000868">
    <property type="protein sequence ID" value="ABX15706.1"/>
    <property type="molecule type" value="Genomic_DNA"/>
</dbReference>
<dbReference type="EMBL" id="AP009385">
    <property type="protein sequence ID" value="BAG43162.1"/>
    <property type="molecule type" value="Genomic_DNA"/>
</dbReference>
<dbReference type="RefSeq" id="WP_012213683.1">
    <property type="nucleotide sequence ID" value="NC_010084.1"/>
</dbReference>
<dbReference type="SMR" id="A9ACL5"/>
<dbReference type="STRING" id="395019.BMULJ_01222"/>
<dbReference type="KEGG" id="bmj:BMULJ_01222"/>
<dbReference type="KEGG" id="bmu:Bmul_2021"/>
<dbReference type="eggNOG" id="COG1109">
    <property type="taxonomic scope" value="Bacteria"/>
</dbReference>
<dbReference type="HOGENOM" id="CLU_016950_7_0_4"/>
<dbReference type="Proteomes" id="UP000008815">
    <property type="component" value="Chromosome 1"/>
</dbReference>
<dbReference type="GO" id="GO:0005829">
    <property type="term" value="C:cytosol"/>
    <property type="evidence" value="ECO:0007669"/>
    <property type="project" value="TreeGrafter"/>
</dbReference>
<dbReference type="GO" id="GO:0000287">
    <property type="term" value="F:magnesium ion binding"/>
    <property type="evidence" value="ECO:0007669"/>
    <property type="project" value="UniProtKB-UniRule"/>
</dbReference>
<dbReference type="GO" id="GO:0008966">
    <property type="term" value="F:phosphoglucosamine mutase activity"/>
    <property type="evidence" value="ECO:0007669"/>
    <property type="project" value="UniProtKB-UniRule"/>
</dbReference>
<dbReference type="GO" id="GO:0004615">
    <property type="term" value="F:phosphomannomutase activity"/>
    <property type="evidence" value="ECO:0007669"/>
    <property type="project" value="TreeGrafter"/>
</dbReference>
<dbReference type="GO" id="GO:0005975">
    <property type="term" value="P:carbohydrate metabolic process"/>
    <property type="evidence" value="ECO:0007669"/>
    <property type="project" value="InterPro"/>
</dbReference>
<dbReference type="GO" id="GO:0009252">
    <property type="term" value="P:peptidoglycan biosynthetic process"/>
    <property type="evidence" value="ECO:0007669"/>
    <property type="project" value="TreeGrafter"/>
</dbReference>
<dbReference type="GO" id="GO:0006048">
    <property type="term" value="P:UDP-N-acetylglucosamine biosynthetic process"/>
    <property type="evidence" value="ECO:0007669"/>
    <property type="project" value="TreeGrafter"/>
</dbReference>
<dbReference type="CDD" id="cd05802">
    <property type="entry name" value="GlmM"/>
    <property type="match status" value="1"/>
</dbReference>
<dbReference type="FunFam" id="3.30.310.50:FF:000001">
    <property type="entry name" value="Phosphoglucosamine mutase"/>
    <property type="match status" value="1"/>
</dbReference>
<dbReference type="FunFam" id="3.40.120.10:FF:000001">
    <property type="entry name" value="Phosphoglucosamine mutase"/>
    <property type="match status" value="1"/>
</dbReference>
<dbReference type="FunFam" id="3.40.120.10:FF:000003">
    <property type="entry name" value="Phosphoglucosamine mutase"/>
    <property type="match status" value="1"/>
</dbReference>
<dbReference type="Gene3D" id="3.40.120.10">
    <property type="entry name" value="Alpha-D-Glucose-1,6-Bisphosphate, subunit A, domain 3"/>
    <property type="match status" value="3"/>
</dbReference>
<dbReference type="Gene3D" id="3.30.310.50">
    <property type="entry name" value="Alpha-D-phosphohexomutase, C-terminal domain"/>
    <property type="match status" value="1"/>
</dbReference>
<dbReference type="HAMAP" id="MF_01554_B">
    <property type="entry name" value="GlmM_B"/>
    <property type="match status" value="1"/>
</dbReference>
<dbReference type="InterPro" id="IPR005844">
    <property type="entry name" value="A-D-PHexomutase_a/b/a-I"/>
</dbReference>
<dbReference type="InterPro" id="IPR016055">
    <property type="entry name" value="A-D-PHexomutase_a/b/a-I/II/III"/>
</dbReference>
<dbReference type="InterPro" id="IPR005845">
    <property type="entry name" value="A-D-PHexomutase_a/b/a-II"/>
</dbReference>
<dbReference type="InterPro" id="IPR005846">
    <property type="entry name" value="A-D-PHexomutase_a/b/a-III"/>
</dbReference>
<dbReference type="InterPro" id="IPR005843">
    <property type="entry name" value="A-D-PHexomutase_C"/>
</dbReference>
<dbReference type="InterPro" id="IPR036900">
    <property type="entry name" value="A-D-PHexomutase_C_sf"/>
</dbReference>
<dbReference type="InterPro" id="IPR016066">
    <property type="entry name" value="A-D-PHexomutase_CS"/>
</dbReference>
<dbReference type="InterPro" id="IPR005841">
    <property type="entry name" value="Alpha-D-phosphohexomutase_SF"/>
</dbReference>
<dbReference type="InterPro" id="IPR006352">
    <property type="entry name" value="GlmM_bact"/>
</dbReference>
<dbReference type="InterPro" id="IPR050060">
    <property type="entry name" value="Phosphoglucosamine_mutase"/>
</dbReference>
<dbReference type="NCBIfam" id="TIGR01455">
    <property type="entry name" value="glmM"/>
    <property type="match status" value="1"/>
</dbReference>
<dbReference type="NCBIfam" id="NF008139">
    <property type="entry name" value="PRK10887.1"/>
    <property type="match status" value="1"/>
</dbReference>
<dbReference type="PANTHER" id="PTHR42946:SF1">
    <property type="entry name" value="PHOSPHOGLUCOMUTASE (ALPHA-D-GLUCOSE-1,6-BISPHOSPHATE-DEPENDENT)"/>
    <property type="match status" value="1"/>
</dbReference>
<dbReference type="PANTHER" id="PTHR42946">
    <property type="entry name" value="PHOSPHOHEXOSE MUTASE"/>
    <property type="match status" value="1"/>
</dbReference>
<dbReference type="Pfam" id="PF02878">
    <property type="entry name" value="PGM_PMM_I"/>
    <property type="match status" value="1"/>
</dbReference>
<dbReference type="Pfam" id="PF02879">
    <property type="entry name" value="PGM_PMM_II"/>
    <property type="match status" value="1"/>
</dbReference>
<dbReference type="Pfam" id="PF02880">
    <property type="entry name" value="PGM_PMM_III"/>
    <property type="match status" value="1"/>
</dbReference>
<dbReference type="Pfam" id="PF00408">
    <property type="entry name" value="PGM_PMM_IV"/>
    <property type="match status" value="1"/>
</dbReference>
<dbReference type="PRINTS" id="PR00509">
    <property type="entry name" value="PGMPMM"/>
</dbReference>
<dbReference type="SUPFAM" id="SSF55957">
    <property type="entry name" value="Phosphoglucomutase, C-terminal domain"/>
    <property type="match status" value="1"/>
</dbReference>
<dbReference type="SUPFAM" id="SSF53738">
    <property type="entry name" value="Phosphoglucomutase, first 3 domains"/>
    <property type="match status" value="3"/>
</dbReference>
<dbReference type="PROSITE" id="PS00710">
    <property type="entry name" value="PGM_PMM"/>
    <property type="match status" value="1"/>
</dbReference>
<name>GLMM_BURM1</name>
<proteinExistence type="inferred from homology"/>
<gene>
    <name evidence="1" type="primary">glmM</name>
    <name type="ordered locus">Bmul_2021</name>
    <name type="ordered locus">BMULJ_01222</name>
</gene>
<sequence length="451" mass="47138">MGRRYFGTDGIRGTVGDAPITPDFVLRLGYAAGKVLAGTADVAPGARPTVLIGKDTRVSGYMLEAALEAGFSAAGVDVMLAGPMPTPGVAYLTRALRLSAGVVISASHNPYPDNGIKFFSADGNKLPDDTEAAIEAWLDKPLECAPSDGLGKARRLDDAAGRYIEFCKSTFPAAFDLRGLKLVVDCAHGAAYQVAPHVFHELGADVIPIGVAPNGFNINDGVGATAPDALMRAVRANRADLGIALDGDADRLQIVDASGRLYNGDELLYVLVQDRIATDGKVEGAVGTLMTNLAVEVALQRAGVQFVRAAVGDRYVLEKLREHGWQLGAEGSGHILSLDRHSTGDGIVSALLVLAALKRSGKTLAQMLDGVTLFPQKLINVRMKPGADWKDSASIRAAIETAEAALAGSGRVLIRASGTEPVLRVMVEAQQAADATRHAEAIAEAVRAATA</sequence>
<evidence type="ECO:0000255" key="1">
    <source>
        <dbReference type="HAMAP-Rule" id="MF_01554"/>
    </source>
</evidence>
<feature type="chain" id="PRO_1000201069" description="Phosphoglucosamine mutase">
    <location>
        <begin position="1"/>
        <end position="451"/>
    </location>
</feature>
<feature type="active site" description="Phosphoserine intermediate" evidence="1">
    <location>
        <position position="107"/>
    </location>
</feature>
<feature type="binding site" description="via phosphate group" evidence="1">
    <location>
        <position position="107"/>
    </location>
    <ligand>
        <name>Mg(2+)</name>
        <dbReference type="ChEBI" id="CHEBI:18420"/>
    </ligand>
</feature>
<feature type="binding site" evidence="1">
    <location>
        <position position="246"/>
    </location>
    <ligand>
        <name>Mg(2+)</name>
        <dbReference type="ChEBI" id="CHEBI:18420"/>
    </ligand>
</feature>
<feature type="binding site" evidence="1">
    <location>
        <position position="248"/>
    </location>
    <ligand>
        <name>Mg(2+)</name>
        <dbReference type="ChEBI" id="CHEBI:18420"/>
    </ligand>
</feature>
<feature type="binding site" evidence="1">
    <location>
        <position position="250"/>
    </location>
    <ligand>
        <name>Mg(2+)</name>
        <dbReference type="ChEBI" id="CHEBI:18420"/>
    </ligand>
</feature>
<feature type="modified residue" description="Phosphoserine" evidence="1">
    <location>
        <position position="107"/>
    </location>
</feature>
<comment type="function">
    <text evidence="1">Catalyzes the conversion of glucosamine-6-phosphate to glucosamine-1-phosphate.</text>
</comment>
<comment type="catalytic activity">
    <reaction evidence="1">
        <text>alpha-D-glucosamine 1-phosphate = D-glucosamine 6-phosphate</text>
        <dbReference type="Rhea" id="RHEA:23424"/>
        <dbReference type="ChEBI" id="CHEBI:58516"/>
        <dbReference type="ChEBI" id="CHEBI:58725"/>
        <dbReference type="EC" id="5.4.2.10"/>
    </reaction>
</comment>
<comment type="cofactor">
    <cofactor evidence="1">
        <name>Mg(2+)</name>
        <dbReference type="ChEBI" id="CHEBI:18420"/>
    </cofactor>
    <text evidence="1">Binds 1 Mg(2+) ion per subunit.</text>
</comment>
<comment type="PTM">
    <text evidence="1">Activated by phosphorylation.</text>
</comment>
<comment type="similarity">
    <text evidence="1">Belongs to the phosphohexose mutase family.</text>
</comment>
<reference key="1">
    <citation type="submission" date="2007-10" db="EMBL/GenBank/DDBJ databases">
        <title>Complete sequence of chromosome 1 of Burkholderia multivorans ATCC 17616.</title>
        <authorList>
            <person name="Copeland A."/>
            <person name="Lucas S."/>
            <person name="Lapidus A."/>
            <person name="Barry K."/>
            <person name="Glavina del Rio T."/>
            <person name="Dalin E."/>
            <person name="Tice H."/>
            <person name="Pitluck S."/>
            <person name="Chain P."/>
            <person name="Malfatti S."/>
            <person name="Shin M."/>
            <person name="Vergez L."/>
            <person name="Schmutz J."/>
            <person name="Larimer F."/>
            <person name="Land M."/>
            <person name="Hauser L."/>
            <person name="Kyrpides N."/>
            <person name="Kim E."/>
            <person name="Tiedje J."/>
            <person name="Richardson P."/>
        </authorList>
    </citation>
    <scope>NUCLEOTIDE SEQUENCE [LARGE SCALE GENOMIC DNA]</scope>
    <source>
        <strain>ATCC 17616 / 249</strain>
    </source>
</reference>
<reference key="2">
    <citation type="submission" date="2007-04" db="EMBL/GenBank/DDBJ databases">
        <title>Complete genome sequence of Burkholderia multivorans ATCC 17616.</title>
        <authorList>
            <person name="Ohtsubo Y."/>
            <person name="Yamashita A."/>
            <person name="Kurokawa K."/>
            <person name="Takami H."/>
            <person name="Yuhara S."/>
            <person name="Nishiyama E."/>
            <person name="Endo R."/>
            <person name="Miyazaki R."/>
            <person name="Ono A."/>
            <person name="Yano K."/>
            <person name="Ito M."/>
            <person name="Sota M."/>
            <person name="Yuji N."/>
            <person name="Hattori M."/>
            <person name="Tsuda M."/>
        </authorList>
    </citation>
    <scope>NUCLEOTIDE SEQUENCE [LARGE SCALE GENOMIC DNA]</scope>
    <source>
        <strain>ATCC 17616 / 249</strain>
    </source>
</reference>
<accession>A9ACL5</accession>
<keyword id="KW-0413">Isomerase</keyword>
<keyword id="KW-0460">Magnesium</keyword>
<keyword id="KW-0479">Metal-binding</keyword>
<keyword id="KW-0597">Phosphoprotein</keyword>
<keyword id="KW-1185">Reference proteome</keyword>